<evidence type="ECO:0000255" key="1">
    <source>
        <dbReference type="HAMAP-Rule" id="MF_00123"/>
    </source>
</evidence>
<protein>
    <recommendedName>
        <fullName evidence="1">Arginine--tRNA ligase</fullName>
        <ecNumber evidence="1">6.1.1.19</ecNumber>
    </recommendedName>
    <alternativeName>
        <fullName evidence="1">Arginyl-tRNA synthetase</fullName>
        <shortName evidence="1">ArgRS</shortName>
    </alternativeName>
</protein>
<gene>
    <name evidence="1" type="primary">argS</name>
    <name type="ordered locus">Pden_1870</name>
</gene>
<feature type="chain" id="PRO_1000018083" description="Arginine--tRNA ligase">
    <location>
        <begin position="1"/>
        <end position="581"/>
    </location>
</feature>
<feature type="short sequence motif" description="'HIGH' region">
    <location>
        <begin position="131"/>
        <end position="141"/>
    </location>
</feature>
<name>SYR_PARDP</name>
<accession>A1B373</accession>
<dbReference type="EC" id="6.1.1.19" evidence="1"/>
<dbReference type="EMBL" id="CP000489">
    <property type="protein sequence ID" value="ABL69967.1"/>
    <property type="molecule type" value="Genomic_DNA"/>
</dbReference>
<dbReference type="RefSeq" id="WP_011748164.1">
    <property type="nucleotide sequence ID" value="NC_008686.1"/>
</dbReference>
<dbReference type="SMR" id="A1B373"/>
<dbReference type="STRING" id="318586.Pden_1870"/>
<dbReference type="EnsemblBacteria" id="ABL69967">
    <property type="protein sequence ID" value="ABL69967"/>
    <property type="gene ID" value="Pden_1870"/>
</dbReference>
<dbReference type="GeneID" id="93450268"/>
<dbReference type="KEGG" id="pde:Pden_1870"/>
<dbReference type="eggNOG" id="COG0018">
    <property type="taxonomic scope" value="Bacteria"/>
</dbReference>
<dbReference type="HOGENOM" id="CLU_006406_0_1_5"/>
<dbReference type="OrthoDB" id="9803211at2"/>
<dbReference type="Proteomes" id="UP000000361">
    <property type="component" value="Chromosome 1"/>
</dbReference>
<dbReference type="GO" id="GO:0005737">
    <property type="term" value="C:cytoplasm"/>
    <property type="evidence" value="ECO:0007669"/>
    <property type="project" value="UniProtKB-SubCell"/>
</dbReference>
<dbReference type="GO" id="GO:0004814">
    <property type="term" value="F:arginine-tRNA ligase activity"/>
    <property type="evidence" value="ECO:0007669"/>
    <property type="project" value="UniProtKB-UniRule"/>
</dbReference>
<dbReference type="GO" id="GO:0005524">
    <property type="term" value="F:ATP binding"/>
    <property type="evidence" value="ECO:0007669"/>
    <property type="project" value="UniProtKB-UniRule"/>
</dbReference>
<dbReference type="GO" id="GO:0006420">
    <property type="term" value="P:arginyl-tRNA aminoacylation"/>
    <property type="evidence" value="ECO:0007669"/>
    <property type="project" value="UniProtKB-UniRule"/>
</dbReference>
<dbReference type="CDD" id="cd00671">
    <property type="entry name" value="ArgRS_core"/>
    <property type="match status" value="1"/>
</dbReference>
<dbReference type="FunFam" id="3.40.50.620:FF:000062">
    <property type="entry name" value="Arginine--tRNA ligase"/>
    <property type="match status" value="1"/>
</dbReference>
<dbReference type="Gene3D" id="3.30.1360.70">
    <property type="entry name" value="Arginyl tRNA synthetase N-terminal domain"/>
    <property type="match status" value="1"/>
</dbReference>
<dbReference type="Gene3D" id="3.40.50.620">
    <property type="entry name" value="HUPs"/>
    <property type="match status" value="1"/>
</dbReference>
<dbReference type="Gene3D" id="1.10.730.10">
    <property type="entry name" value="Isoleucyl-tRNA Synthetase, Domain 1"/>
    <property type="match status" value="1"/>
</dbReference>
<dbReference type="HAMAP" id="MF_00123">
    <property type="entry name" value="Arg_tRNA_synth"/>
    <property type="match status" value="1"/>
</dbReference>
<dbReference type="InterPro" id="IPR001412">
    <property type="entry name" value="aa-tRNA-synth_I_CS"/>
</dbReference>
<dbReference type="InterPro" id="IPR001278">
    <property type="entry name" value="Arg-tRNA-ligase"/>
</dbReference>
<dbReference type="InterPro" id="IPR005148">
    <property type="entry name" value="Arg-tRNA-synth_N"/>
</dbReference>
<dbReference type="InterPro" id="IPR036695">
    <property type="entry name" value="Arg-tRNA-synth_N_sf"/>
</dbReference>
<dbReference type="InterPro" id="IPR035684">
    <property type="entry name" value="ArgRS_core"/>
</dbReference>
<dbReference type="InterPro" id="IPR008909">
    <property type="entry name" value="DALR_anticod-bd"/>
</dbReference>
<dbReference type="InterPro" id="IPR014729">
    <property type="entry name" value="Rossmann-like_a/b/a_fold"/>
</dbReference>
<dbReference type="InterPro" id="IPR009080">
    <property type="entry name" value="tRNAsynth_Ia_anticodon-bd"/>
</dbReference>
<dbReference type="NCBIfam" id="TIGR00456">
    <property type="entry name" value="argS"/>
    <property type="match status" value="1"/>
</dbReference>
<dbReference type="PANTHER" id="PTHR11956:SF5">
    <property type="entry name" value="ARGININE--TRNA LIGASE, CYTOPLASMIC"/>
    <property type="match status" value="1"/>
</dbReference>
<dbReference type="PANTHER" id="PTHR11956">
    <property type="entry name" value="ARGINYL-TRNA SYNTHETASE"/>
    <property type="match status" value="1"/>
</dbReference>
<dbReference type="Pfam" id="PF03485">
    <property type="entry name" value="Arg_tRNA_synt_N"/>
    <property type="match status" value="1"/>
</dbReference>
<dbReference type="Pfam" id="PF05746">
    <property type="entry name" value="DALR_1"/>
    <property type="match status" value="1"/>
</dbReference>
<dbReference type="Pfam" id="PF00750">
    <property type="entry name" value="tRNA-synt_1d"/>
    <property type="match status" value="1"/>
</dbReference>
<dbReference type="PRINTS" id="PR01038">
    <property type="entry name" value="TRNASYNTHARG"/>
</dbReference>
<dbReference type="SMART" id="SM01016">
    <property type="entry name" value="Arg_tRNA_synt_N"/>
    <property type="match status" value="1"/>
</dbReference>
<dbReference type="SMART" id="SM00836">
    <property type="entry name" value="DALR_1"/>
    <property type="match status" value="1"/>
</dbReference>
<dbReference type="SUPFAM" id="SSF47323">
    <property type="entry name" value="Anticodon-binding domain of a subclass of class I aminoacyl-tRNA synthetases"/>
    <property type="match status" value="1"/>
</dbReference>
<dbReference type="SUPFAM" id="SSF55190">
    <property type="entry name" value="Arginyl-tRNA synthetase (ArgRS), N-terminal 'additional' domain"/>
    <property type="match status" value="1"/>
</dbReference>
<dbReference type="SUPFAM" id="SSF52374">
    <property type="entry name" value="Nucleotidylyl transferase"/>
    <property type="match status" value="1"/>
</dbReference>
<dbReference type="PROSITE" id="PS00178">
    <property type="entry name" value="AA_TRNA_LIGASE_I"/>
    <property type="match status" value="1"/>
</dbReference>
<organism>
    <name type="scientific">Paracoccus denitrificans (strain Pd 1222)</name>
    <dbReference type="NCBI Taxonomy" id="318586"/>
    <lineage>
        <taxon>Bacteria</taxon>
        <taxon>Pseudomonadati</taxon>
        <taxon>Pseudomonadota</taxon>
        <taxon>Alphaproteobacteria</taxon>
        <taxon>Rhodobacterales</taxon>
        <taxon>Paracoccaceae</taxon>
        <taxon>Paracoccus</taxon>
    </lineage>
</organism>
<sequence length="581" mass="63562">MNLFSDIRTLVIGALAQMEQAGELPAGLDTANVTVEPPRDAAHGDMATNAAMVLAKPAGKKPRDIAEALAARLAADPRIASAEVAGPGFLNLRLVSGEWQSVVRAALAEGGDYGRSEMGRGQRINVEFVSANPTGPMHVGHTRGAVFGDALAALLDFSGHEVTREYYINDGGAQVDVLARSAYERYREANGLEPEIREGLYPGDYLIPVGEALKTKYGETLLDKPEEEWLAEVRDFATRAMMDMIREDLALLNVHMDVFSSEKALYGTGRIEAAIERLRQAGLIYEGVLEPPKGKTPEDWEPREQTLFRSTAHGDDVDRPVKKSDGSWTYFAPDIAYHWDKIERGYDALIDVFGADHGGYVKRMTAAVKALSDGRVPLDVKLIQLVRLFKNGEPFKMSKRAGTFVTLRDVVEQAGADVTRFHMLTRKNDAALDFDFARVLEQSKDNPVWYVQYASARVNSVLNKAAGMGVDTTDAALAQADLAQLSHPAELELARKVAEWPRTVEIAARAHEPHRIAFFLYDIASELHSLWNRGNDEPALRFLQEGDPAAMAAKIALARSVGVVISAGLGILGVTPAKEMR</sequence>
<keyword id="KW-0030">Aminoacyl-tRNA synthetase</keyword>
<keyword id="KW-0067">ATP-binding</keyword>
<keyword id="KW-0963">Cytoplasm</keyword>
<keyword id="KW-0436">Ligase</keyword>
<keyword id="KW-0547">Nucleotide-binding</keyword>
<keyword id="KW-0648">Protein biosynthesis</keyword>
<keyword id="KW-1185">Reference proteome</keyword>
<comment type="catalytic activity">
    <reaction evidence="1">
        <text>tRNA(Arg) + L-arginine + ATP = L-arginyl-tRNA(Arg) + AMP + diphosphate</text>
        <dbReference type="Rhea" id="RHEA:20301"/>
        <dbReference type="Rhea" id="RHEA-COMP:9658"/>
        <dbReference type="Rhea" id="RHEA-COMP:9673"/>
        <dbReference type="ChEBI" id="CHEBI:30616"/>
        <dbReference type="ChEBI" id="CHEBI:32682"/>
        <dbReference type="ChEBI" id="CHEBI:33019"/>
        <dbReference type="ChEBI" id="CHEBI:78442"/>
        <dbReference type="ChEBI" id="CHEBI:78513"/>
        <dbReference type="ChEBI" id="CHEBI:456215"/>
        <dbReference type="EC" id="6.1.1.19"/>
    </reaction>
</comment>
<comment type="subunit">
    <text evidence="1">Monomer.</text>
</comment>
<comment type="subcellular location">
    <subcellularLocation>
        <location evidence="1">Cytoplasm</location>
    </subcellularLocation>
</comment>
<comment type="similarity">
    <text evidence="1">Belongs to the class-I aminoacyl-tRNA synthetase family.</text>
</comment>
<reference key="1">
    <citation type="submission" date="2006-12" db="EMBL/GenBank/DDBJ databases">
        <title>Complete sequence of chromosome 1 of Paracoccus denitrificans PD1222.</title>
        <authorList>
            <person name="Copeland A."/>
            <person name="Lucas S."/>
            <person name="Lapidus A."/>
            <person name="Barry K."/>
            <person name="Detter J.C."/>
            <person name="Glavina del Rio T."/>
            <person name="Hammon N."/>
            <person name="Israni S."/>
            <person name="Dalin E."/>
            <person name="Tice H."/>
            <person name="Pitluck S."/>
            <person name="Munk A.C."/>
            <person name="Brettin T."/>
            <person name="Bruce D."/>
            <person name="Han C."/>
            <person name="Tapia R."/>
            <person name="Gilna P."/>
            <person name="Schmutz J."/>
            <person name="Larimer F."/>
            <person name="Land M."/>
            <person name="Hauser L."/>
            <person name="Kyrpides N."/>
            <person name="Lykidis A."/>
            <person name="Spiro S."/>
            <person name="Richardson D.J."/>
            <person name="Moir J.W.B."/>
            <person name="Ferguson S.J."/>
            <person name="van Spanning R.J.M."/>
            <person name="Richardson P."/>
        </authorList>
    </citation>
    <scope>NUCLEOTIDE SEQUENCE [LARGE SCALE GENOMIC DNA]</scope>
    <source>
        <strain>Pd 1222</strain>
    </source>
</reference>
<proteinExistence type="inferred from homology"/>